<reference key="1">
    <citation type="submission" date="1997-08" db="EMBL/GenBank/DDBJ databases">
        <title>Rice ragged stunt oryzavirus:complete sequence and genome organization.</title>
        <authorList>
            <person name="Upadhyaya N.M."/>
            <person name="Li Z."/>
            <person name="Ramm K."/>
            <person name="Yang M."/>
            <person name="Gellatly J.A."/>
            <person name="Kositratana W."/>
            <person name="Gerlach W.L."/>
            <person name="Waterhouse P.M."/>
        </authorList>
    </citation>
    <scope>NUCLEOTIDE SEQUENCE [GENOMIC RNA]</scope>
</reference>
<evidence type="ECO:0000255" key="1">
    <source>
        <dbReference type="PROSITE-ProRule" id="PRU01205"/>
    </source>
</evidence>
<evidence type="ECO:0000305" key="2"/>
<dbReference type="EMBL" id="AF020334">
    <property type="protein sequence ID" value="AAC04672.1"/>
    <property type="molecule type" value="Genomic_RNA"/>
</dbReference>
<dbReference type="PIR" id="T08608">
    <property type="entry name" value="T08608"/>
</dbReference>
<dbReference type="RefSeq" id="NP_620514.1">
    <property type="nucleotide sequence ID" value="NC_003749.1"/>
</dbReference>
<dbReference type="SMR" id="O56042"/>
<dbReference type="GeneID" id="991195"/>
<dbReference type="KEGG" id="vg:991195"/>
<dbReference type="Proteomes" id="UP000000348">
    <property type="component" value="Genome"/>
</dbReference>
<dbReference type="GO" id="GO:0039624">
    <property type="term" value="C:viral outer capsid"/>
    <property type="evidence" value="ECO:0007669"/>
    <property type="project" value="UniProtKB-KW"/>
</dbReference>
<dbReference type="GO" id="GO:0008233">
    <property type="term" value="F:peptidase activity"/>
    <property type="evidence" value="ECO:0007669"/>
    <property type="project" value="InterPro"/>
</dbReference>
<dbReference type="InterPro" id="IPR008580">
    <property type="entry name" value="PPPDE_dom"/>
</dbReference>
<dbReference type="Pfam" id="PF05903">
    <property type="entry name" value="Peptidase_C97"/>
    <property type="match status" value="1"/>
</dbReference>
<dbReference type="PROSITE" id="PS51858">
    <property type="entry name" value="PPPDE"/>
    <property type="match status" value="1"/>
</dbReference>
<comment type="subcellular location">
    <subcellularLocation>
        <location evidence="2">Virion</location>
    </subcellularLocation>
</comment>
<keyword id="KW-0167">Capsid protein</keyword>
<keyword id="KW-1152">Outer capsid protein</keyword>
<keyword id="KW-1185">Reference proteome</keyword>
<keyword id="KW-0946">Virion</keyword>
<organism>
    <name type="scientific">Rice ragged stunt virus (isolate Thailand)</name>
    <name type="common">RRSV</name>
    <dbReference type="NCBI Taxonomy" id="649603"/>
    <lineage>
        <taxon>Viruses</taxon>
        <taxon>Riboviria</taxon>
        <taxon>Orthornavirae</taxon>
        <taxon>Duplornaviricota</taxon>
        <taxon>Resentoviricetes</taxon>
        <taxon>Reovirales</taxon>
        <taxon>Spinareoviridae</taxon>
        <taxon>Oryzavirus</taxon>
        <taxon>Rice ragged stunt virus</taxon>
    </lineage>
</organism>
<organismHost>
    <name type="scientific">Oryza latifolia</name>
    <dbReference type="NCBI Taxonomy" id="4534"/>
</organismHost>
<organismHost>
    <name type="scientific">Oryza nivara</name>
    <name type="common">Indian wild rice</name>
    <name type="synonym">Oryza sativa f. spontanea</name>
    <dbReference type="NCBI Taxonomy" id="4536"/>
</organismHost>
<organismHost>
    <name type="scientific">Oryza rufipogon</name>
    <name type="common">Brownbeard rice</name>
    <name type="synonym">Asian wild rice</name>
    <dbReference type="NCBI Taxonomy" id="4529"/>
</organismHost>
<sequence>MEQRQYILDLVRRELTDTPQTQDLQKLTERIISLEKTITQLGTLLLGPNSTTAHEVSSLATAMQKVLYYNRAKAAISDFIMAIPRYPLYSYYGNDDIDDYHLAVVNRKPILPQFRYLGLMFGKPATGIQPYNFEVSFNLSKVEQTLISELAPTESQVIEDMRRDSTMLLKAEGRYDKSLNVFTVLITIITSNKLIYSQRLNIPGHRVASFELMIIANAVHTTVFEPAKVTKLPSCELGTSSIMSTTFEIRVQDMSTLPSPAFHARTIQSIKKTWRNADFSTGQLSAEDATYEPKMSGAEDVVIPHVYGLAESCEILTISDVYESVYNFESLCYCYSKKSGMEMAVRMMMLALELMRDDYKQVNSIYDVDHQTSESVGILAGITEGLLANAKAIALLVKHAVLSEELQINLNSIEQSYSRLVPLVPIYVTFDHVGTYSKGDAPIRDEPFSLTGLQLPMFAEGLSNSTIKTKFKSTWSVEPNVFGADHTIDCYESDDFIVLLKPKFAYWDHRYSHQPVSAVSYSDRGKSRTSYVLDCASSYNEESSLGYTSLFLAGRKAASPCALVNIPLNRSVKFESVSFLITSKRSVLPISGENLFGEIDMYIGRVRGTLNCNKFTSTEYIDRDGYKRYGLIGKCTGGSLLNASLSPLWVRLFCGGHKNADQIRFIGFSRTPVVGTLSGESLEVYPMPGSIGSSGTLSQSGRMSIYNDVTSLEVTLSVRHEASLETANVYAQSEIPGAALSTEIRDYIRQQNLYYSDLGLREEEAMIQGAVVMRTTFRGKLYVTKGTDSIPQSVYVWNTQLNDLAVAVKMTADLANAAEIRSKENQFRLNEMEQAVREIENQLLLSGIIDGLAALTGPATPVVKKAASLVFGAMKNMSRSGFRILAAGLTNSYFKTVMTHFLGTRKGVEVWRGLGSACAESSVMIKMSGKTKPIVKEGSTDLFLADKNFILADPIEFAKHNISTKYGGNVEQIGNVVSDSERLAVGGDLGSHVVTVFHRPLSILPEPLRTLLFKLSTSGLSKRDLSAREAWIRQTLHPTHSYATISYDYVLPKTGGNRRVLCFAGVGDPNPYNLPTGDKNVGIGSYMVEFDIIGLDKDTGVKVMRPVPWKQCGYTEEQVWSIYKTLGKEYRKVELKPYTVEDAWRVIAKSSHKRVLSDKAIISTPISYERQRAIEYMLSSHGFDYNLVLNNCQDFTRGLFDYARGGPVPDFIENDVRIAMIHSTSRHFAEVCSWVGV</sequence>
<feature type="chain" id="PRO_0000403634" description="Structural protein VP1">
    <location>
        <begin position="1"/>
        <end position="1237"/>
    </location>
</feature>
<feature type="domain" description="PPPDE" evidence="1">
    <location>
        <begin position="1006"/>
        <end position="1222"/>
    </location>
</feature>
<feature type="active site" evidence="1">
    <location>
        <position position="1040"/>
    </location>
</feature>
<feature type="active site" evidence="1">
    <location>
        <position position="1192"/>
    </location>
</feature>
<protein>
    <recommendedName>
        <fullName>Structural protein VP1</fullName>
    </recommendedName>
</protein>
<name>VP1_RRSVT</name>
<proteinExistence type="predicted"/>
<accession>O56042</accession>